<protein>
    <recommendedName>
        <fullName evidence="1">Nucleoside triphosphate/diphosphate phosphatase</fullName>
        <ecNumber evidence="1">3.6.1.15</ecNumber>
        <ecNumber evidence="1">3.6.1.6</ecNumber>
    </recommendedName>
</protein>
<gene>
    <name type="ordered locus">lp_1241</name>
</gene>
<keyword id="KW-0378">Hydrolase</keyword>
<keyword id="KW-0460">Magnesium</keyword>
<keyword id="KW-0479">Metal-binding</keyword>
<keyword id="KW-1185">Reference proteome</keyword>
<comment type="function">
    <text evidence="1">Has nucleoside phosphatase activity towards nucleoside triphosphates and nucleoside diphosphates.</text>
</comment>
<comment type="catalytic activity">
    <reaction evidence="1">
        <text>a ribonucleoside 5'-triphosphate + H2O = a ribonucleoside 5'-diphosphate + phosphate + H(+)</text>
        <dbReference type="Rhea" id="RHEA:23680"/>
        <dbReference type="ChEBI" id="CHEBI:15377"/>
        <dbReference type="ChEBI" id="CHEBI:15378"/>
        <dbReference type="ChEBI" id="CHEBI:43474"/>
        <dbReference type="ChEBI" id="CHEBI:57930"/>
        <dbReference type="ChEBI" id="CHEBI:61557"/>
        <dbReference type="EC" id="3.6.1.15"/>
    </reaction>
</comment>
<comment type="catalytic activity">
    <reaction evidence="1">
        <text>a ribonucleoside 5'-diphosphate + H2O = a ribonucleoside 5'-phosphate + phosphate + H(+)</text>
        <dbReference type="Rhea" id="RHEA:36799"/>
        <dbReference type="ChEBI" id="CHEBI:15377"/>
        <dbReference type="ChEBI" id="CHEBI:15378"/>
        <dbReference type="ChEBI" id="CHEBI:43474"/>
        <dbReference type="ChEBI" id="CHEBI:57930"/>
        <dbReference type="ChEBI" id="CHEBI:58043"/>
        <dbReference type="EC" id="3.6.1.6"/>
    </reaction>
</comment>
<comment type="cofactor">
    <cofactor evidence="1">
        <name>Mg(2+)</name>
        <dbReference type="ChEBI" id="CHEBI:18420"/>
    </cofactor>
</comment>
<comment type="similarity">
    <text evidence="1">Belongs to the Ntdp family.</text>
</comment>
<dbReference type="EC" id="3.6.1.15" evidence="1"/>
<dbReference type="EC" id="3.6.1.6" evidence="1"/>
<dbReference type="EMBL" id="AL935263">
    <property type="protein sequence ID" value="CCC78623.1"/>
    <property type="molecule type" value="Genomic_DNA"/>
</dbReference>
<dbReference type="RefSeq" id="WP_003643214.1">
    <property type="nucleotide sequence ID" value="NC_004567.2"/>
</dbReference>
<dbReference type="RefSeq" id="YP_004889137.1">
    <property type="nucleotide sequence ID" value="NC_004567.2"/>
</dbReference>
<dbReference type="SMR" id="Q88XG4"/>
<dbReference type="STRING" id="220668.lp_1241"/>
<dbReference type="EnsemblBacteria" id="CCC78623">
    <property type="protein sequence ID" value="CCC78623"/>
    <property type="gene ID" value="lp_1241"/>
</dbReference>
<dbReference type="KEGG" id="lpl:lp_1241"/>
<dbReference type="PATRIC" id="fig|220668.9.peg.1053"/>
<dbReference type="eggNOG" id="COG3557">
    <property type="taxonomic scope" value="Bacteria"/>
</dbReference>
<dbReference type="HOGENOM" id="CLU_109787_1_0_9"/>
<dbReference type="OrthoDB" id="1645325at2"/>
<dbReference type="PhylomeDB" id="Q88XG4"/>
<dbReference type="Proteomes" id="UP000000432">
    <property type="component" value="Chromosome"/>
</dbReference>
<dbReference type="GO" id="GO:0000287">
    <property type="term" value="F:magnesium ion binding"/>
    <property type="evidence" value="ECO:0007669"/>
    <property type="project" value="UniProtKB-UniRule"/>
</dbReference>
<dbReference type="GO" id="GO:0017110">
    <property type="term" value="F:nucleoside diphosphate phosphatase activity"/>
    <property type="evidence" value="ECO:0007669"/>
    <property type="project" value="UniProtKB-UniRule"/>
</dbReference>
<dbReference type="GO" id="GO:0017111">
    <property type="term" value="F:ribonucleoside triphosphate phosphatase activity"/>
    <property type="evidence" value="ECO:0007669"/>
    <property type="project" value="UniProtKB-UniRule"/>
</dbReference>
<dbReference type="Gene3D" id="2.40.380.10">
    <property type="entry name" value="FomD-like"/>
    <property type="match status" value="1"/>
</dbReference>
<dbReference type="HAMAP" id="MF_01568">
    <property type="entry name" value="Ntdp"/>
    <property type="match status" value="1"/>
</dbReference>
<dbReference type="InterPro" id="IPR007295">
    <property type="entry name" value="DUF402"/>
</dbReference>
<dbReference type="InterPro" id="IPR035930">
    <property type="entry name" value="FomD-like_sf"/>
</dbReference>
<dbReference type="InterPro" id="IPR050212">
    <property type="entry name" value="Ntdp-like"/>
</dbReference>
<dbReference type="InterPro" id="IPR016882">
    <property type="entry name" value="SA1684"/>
</dbReference>
<dbReference type="NCBIfam" id="NF010183">
    <property type="entry name" value="PRK13662.1"/>
    <property type="match status" value="1"/>
</dbReference>
<dbReference type="PANTHER" id="PTHR39159">
    <property type="match status" value="1"/>
</dbReference>
<dbReference type="PANTHER" id="PTHR39159:SF1">
    <property type="entry name" value="UPF0374 PROTEIN YGAC"/>
    <property type="match status" value="1"/>
</dbReference>
<dbReference type="Pfam" id="PF04167">
    <property type="entry name" value="DUF402"/>
    <property type="match status" value="1"/>
</dbReference>
<dbReference type="PIRSF" id="PIRSF028345">
    <property type="entry name" value="UCP028345"/>
    <property type="match status" value="1"/>
</dbReference>
<dbReference type="SUPFAM" id="SSF159234">
    <property type="entry name" value="FomD-like"/>
    <property type="match status" value="1"/>
</dbReference>
<proteinExistence type="inferred from homology"/>
<sequence length="182" mass="21649">MAREAKGPKEGDFITIKSYKHDGSLHRTWRDTMVLKTSENVLIGCNDHTLVTEDDGRRWVTREPAIVYFHKHYWFNIVAMIRDNGVSYYCNLASPYVLDKEALKYIDYDLDVKVFPDGERRLLDVDEYEEHGAQWRYSADTDRILKANVKVLVDWIKNKKGPFSQDYIDIWYSRYQELSRRQ</sequence>
<evidence type="ECO:0000255" key="1">
    <source>
        <dbReference type="HAMAP-Rule" id="MF_01568"/>
    </source>
</evidence>
<feature type="chain" id="PRO_0000248097" description="Nucleoside triphosphate/diphosphate phosphatase">
    <location>
        <begin position="1"/>
        <end position="182"/>
    </location>
</feature>
<feature type="active site" description="Proton donor" evidence="1">
    <location>
        <position position="27"/>
    </location>
</feature>
<feature type="binding site" evidence="1">
    <location>
        <position position="91"/>
    </location>
    <ligand>
        <name>Mg(2+)</name>
        <dbReference type="ChEBI" id="CHEBI:18420"/>
        <label>1</label>
    </ligand>
</feature>
<feature type="binding site" evidence="1">
    <location>
        <position position="107"/>
    </location>
    <ligand>
        <name>Mg(2+)</name>
        <dbReference type="ChEBI" id="CHEBI:18420"/>
        <label>1</label>
    </ligand>
</feature>
<feature type="binding site" evidence="1">
    <location>
        <position position="109"/>
    </location>
    <ligand>
        <name>Mg(2+)</name>
        <dbReference type="ChEBI" id="CHEBI:18420"/>
        <label>2</label>
    </ligand>
</feature>
<feature type="binding site" evidence="1">
    <location>
        <position position="111"/>
    </location>
    <ligand>
        <name>Mg(2+)</name>
        <dbReference type="ChEBI" id="CHEBI:18420"/>
        <label>1</label>
    </ligand>
</feature>
<feature type="binding site" evidence="1">
    <location>
        <position position="111"/>
    </location>
    <ligand>
        <name>Mg(2+)</name>
        <dbReference type="ChEBI" id="CHEBI:18420"/>
        <label>2</label>
    </ligand>
</feature>
<feature type="binding site" evidence="1">
    <location>
        <position position="124"/>
    </location>
    <ligand>
        <name>Mg(2+)</name>
        <dbReference type="ChEBI" id="CHEBI:18420"/>
        <label>2</label>
    </ligand>
</feature>
<feature type="binding site" evidence="1">
    <location>
        <position position="127"/>
    </location>
    <ligand>
        <name>Mg(2+)</name>
        <dbReference type="ChEBI" id="CHEBI:18420"/>
        <label>2</label>
    </ligand>
</feature>
<organism>
    <name type="scientific">Lactiplantibacillus plantarum (strain ATCC BAA-793 / NCIMB 8826 / WCFS1)</name>
    <name type="common">Lactobacillus plantarum</name>
    <dbReference type="NCBI Taxonomy" id="220668"/>
    <lineage>
        <taxon>Bacteria</taxon>
        <taxon>Bacillati</taxon>
        <taxon>Bacillota</taxon>
        <taxon>Bacilli</taxon>
        <taxon>Lactobacillales</taxon>
        <taxon>Lactobacillaceae</taxon>
        <taxon>Lactiplantibacillus</taxon>
    </lineage>
</organism>
<name>NTDP_LACPL</name>
<accession>Q88XG4</accession>
<accession>F9UN34</accession>
<reference key="1">
    <citation type="journal article" date="2003" name="Proc. Natl. Acad. Sci. U.S.A.">
        <title>Complete genome sequence of Lactobacillus plantarum WCFS1.</title>
        <authorList>
            <person name="Kleerebezem M."/>
            <person name="Boekhorst J."/>
            <person name="van Kranenburg R."/>
            <person name="Molenaar D."/>
            <person name="Kuipers O.P."/>
            <person name="Leer R."/>
            <person name="Tarchini R."/>
            <person name="Peters S.A."/>
            <person name="Sandbrink H.M."/>
            <person name="Fiers M.W.E.J."/>
            <person name="Stiekema W."/>
            <person name="Klein Lankhorst R.M."/>
            <person name="Bron P.A."/>
            <person name="Hoffer S.M."/>
            <person name="Nierop Groot M.N."/>
            <person name="Kerkhoven R."/>
            <person name="De Vries M."/>
            <person name="Ursing B."/>
            <person name="De Vos W.M."/>
            <person name="Siezen R.J."/>
        </authorList>
    </citation>
    <scope>NUCLEOTIDE SEQUENCE [LARGE SCALE GENOMIC DNA]</scope>
    <source>
        <strain>ATCC BAA-793 / NCIMB 8826 / WCFS1</strain>
    </source>
</reference>
<reference key="2">
    <citation type="journal article" date="2012" name="J. Bacteriol.">
        <title>Complete resequencing and reannotation of the Lactobacillus plantarum WCFS1 genome.</title>
        <authorList>
            <person name="Siezen R.J."/>
            <person name="Francke C."/>
            <person name="Renckens B."/>
            <person name="Boekhorst J."/>
            <person name="Wels M."/>
            <person name="Kleerebezem M."/>
            <person name="van Hijum S.A."/>
        </authorList>
    </citation>
    <scope>NUCLEOTIDE SEQUENCE [LARGE SCALE GENOMIC DNA]</scope>
    <scope>GENOME REANNOTATION</scope>
    <source>
        <strain>ATCC BAA-793 / NCIMB 8826 / WCFS1</strain>
    </source>
</reference>